<protein>
    <recommendedName>
        <fullName>Neutral alpha-glucosidase AB</fullName>
        <ecNumber evidence="5">3.2.1.207</ecNumber>
    </recommendedName>
    <alternativeName>
        <fullName>Alpha-glucosidase 2</fullName>
    </alternativeName>
    <alternativeName>
        <fullName evidence="15">Glucosidase II subunit alpha</fullName>
    </alternativeName>
</protein>
<feature type="signal peptide" evidence="3">
    <location>
        <begin position="1"/>
        <end position="28"/>
    </location>
</feature>
<feature type="chain" id="PRO_0000018571" description="Neutral alpha-glucosidase AB">
    <location>
        <begin position="29"/>
        <end position="944"/>
    </location>
</feature>
<feature type="region of interest" description="Disordered" evidence="4">
    <location>
        <begin position="181"/>
        <end position="238"/>
    </location>
</feature>
<feature type="compositionally biased region" description="Basic and acidic residues" evidence="4">
    <location>
        <begin position="203"/>
        <end position="236"/>
    </location>
</feature>
<feature type="active site" description="Nucleophile" evidence="18">
    <location>
        <position position="542"/>
    </location>
</feature>
<feature type="active site" description="Proton donor" evidence="2">
    <location>
        <position position="618"/>
    </location>
</feature>
<feature type="binding site" evidence="2">
    <location>
        <position position="283"/>
    </location>
    <ligand>
        <name>substrate</name>
    </ligand>
</feature>
<feature type="binding site" evidence="2">
    <location>
        <position position="429"/>
    </location>
    <ligand>
        <name>substrate</name>
    </ligand>
</feature>
<feature type="binding site" evidence="2">
    <location>
        <position position="602"/>
    </location>
    <ligand>
        <name>substrate</name>
    </ligand>
</feature>
<feature type="binding site" evidence="2">
    <location>
        <position position="676"/>
    </location>
    <ligand>
        <name>substrate</name>
    </ligand>
</feature>
<feature type="modified residue" description="Phosphoserine" evidence="20">
    <location>
        <position position="52"/>
    </location>
</feature>
<feature type="glycosylation site" description="N-linked (GlcNAc...) asparagine" evidence="10">
    <location>
        <position position="97"/>
    </location>
</feature>
<feature type="disulfide bond" evidence="2">
    <location>
        <begin position="41"/>
        <end position="47"/>
    </location>
</feature>
<feature type="disulfide bond" evidence="2">
    <location>
        <begin position="633"/>
        <end position="644"/>
    </location>
</feature>
<feature type="splice variant" id="VSP_039976" description="In isoform 3." evidence="14">
    <original>RQRS</original>
    <variation>CCWC</variation>
    <location>
        <begin position="49"/>
        <end position="52"/>
    </location>
</feature>
<feature type="splice variant" id="VSP_039977" description="In isoform 3." evidence="14">
    <location>
        <begin position="53"/>
        <end position="944"/>
    </location>
</feature>
<feature type="splice variant" id="VSP_010674" description="In isoform 2." evidence="13">
    <original>S</original>
    <variation>SFSDKVNLTLGSIWDKIKNLFSR</variation>
    <location>
        <position position="187"/>
    </location>
</feature>
<feature type="sequence variant" id="VAR_085221" description="In PKD3; uncertain significance; no apparent effect on the endoplasmic reticulum localization; dbSNP:rs750723025." evidence="9">
    <location>
        <begin position="4"/>
        <end position="5"/>
    </location>
</feature>
<feature type="sequence variant" id="VAR_077088" description="No effect on PKD1 and PKD2 localization to the cell surface; dbSNP:rs1392032530." evidence="7">
    <original>Q</original>
    <variation>R</variation>
    <location>
        <position position="95"/>
    </location>
</feature>
<feature type="sequence variant" id="VAR_024529" description="In dbSNP:rs2276296.">
    <original>R</original>
    <variation>W</variation>
    <location>
        <position position="154"/>
    </location>
</feature>
<feature type="sequence variant" id="VAR_022086" description="In dbSNP:rs2276295.">
    <original>R</original>
    <variation>Q</variation>
    <location>
        <position position="173"/>
    </location>
</feature>
<feature type="sequence variant" id="VAR_077089" description="No effect on PKD1 and PKD2 localization to the cell surface." evidence="7">
    <original>T</original>
    <variation>A</variation>
    <location>
        <position position="232"/>
    </location>
</feature>
<feature type="sequence variant" id="VAR_050272" description="No effect on PKD1 and PKD2 localization to the cell surface; dbSNP:rs1063445." evidence="7">
    <original>R</original>
    <variation>C</variation>
    <location>
        <position position="309"/>
    </location>
</feature>
<feature type="sequence variant" id="VAR_077090" description="In PKD3; fails to promote PKD1 and PKD2 localization to the cell surface; dbSNP:rs879255642." evidence="7">
    <original>T</original>
    <variation>R</variation>
    <location>
        <position position="383"/>
    </location>
</feature>
<feature type="sequence variant" id="VAR_077091" description="In PKD3; fails to promote PKD1 and PKD2 localization to the cell surface; dbSNP:rs770519542." evidence="7">
    <original>R</original>
    <variation>L</variation>
    <location>
        <position position="400"/>
    </location>
</feature>
<feature type="sequence variant" id="VAR_085222" description="Found in a patient with polycystic liver disease; uncertain significance; dbSNP:rs1465649718." evidence="9">
    <original>R</original>
    <variation>P</variation>
    <location>
        <position position="590"/>
    </location>
</feature>
<feature type="sequence variant" id="VAR_080920" description="Found in a patient affected by polycystic liver disease; uncertain significance; the patient carried additional PKHD1 variant; the mutation results in significantly reduced alpha-glucosidase activity; dbSNP:rs753910059." evidence="8">
    <original>H</original>
    <variation>N</variation>
    <location>
        <position position="785"/>
    </location>
</feature>
<feature type="sequence variant" id="VAR_085223" description="Found in a patient with polycystic liver disease; uncertain significance; no apparent effect on the endoplasmic reticulum localization." evidence="9">
    <location>
        <begin position="815"/>
        <end position="944"/>
    </location>
</feature>
<feature type="sequence variant" id="VAR_077092" description="In PKD3; fails to promote PKD1 and PKD2 localization to the cell surface; dbSNP:rs879255643." evidence="7">
    <original>R</original>
    <variation>W</variation>
    <location>
        <position position="817"/>
    </location>
</feature>
<feature type="sequence variant" id="VAR_080921" description="In dbSNP:rs114915323." evidence="8 11 12">
    <original>H</original>
    <variation>Y</variation>
    <location>
        <position position="850"/>
    </location>
</feature>
<feature type="sequence variant" id="VAR_085224" description="Found in a patient with polycystic liver disease; uncertain significance; no apparent effect on the endoplasmic reticulum localization; dbSNP:rs1210158408." evidence="9">
    <location>
        <begin position="864"/>
        <end position="944"/>
    </location>
</feature>
<feature type="sequence variant" id="VAR_080922" description="Found in a patient affected by polycystic liver disease; uncertain significance." evidence="8">
    <location>
        <begin position="918"/>
        <end position="944"/>
    </location>
</feature>
<feature type="mutagenesis site" description="Loss of activity." evidence="5">
    <original>D</original>
    <variation>N</variation>
    <location>
        <position position="542"/>
    </location>
</feature>
<feature type="sequence conflict" description="In Ref. 5; AAH65266." evidence="17" ref="5">
    <original>R</original>
    <variation>C</variation>
    <location>
        <position position="400"/>
    </location>
</feature>
<feature type="sequence conflict" description="In Ref. 5; AAH65266." evidence="17" ref="5">
    <original>R</original>
    <variation>W</variation>
    <location>
        <position position="461"/>
    </location>
</feature>
<feature type="helix" evidence="22">
    <location>
        <begin position="35"/>
        <end position="37"/>
    </location>
</feature>
<feature type="turn" evidence="21">
    <location>
        <begin position="41"/>
        <end position="43"/>
    </location>
</feature>
<feature type="helix" evidence="21">
    <location>
        <begin position="45"/>
        <end position="50"/>
    </location>
</feature>
<feature type="strand" evidence="21">
    <location>
        <begin position="59"/>
        <end position="62"/>
    </location>
</feature>
<feature type="strand" evidence="21">
    <location>
        <begin position="74"/>
        <end position="80"/>
    </location>
</feature>
<feature type="turn" evidence="21">
    <location>
        <begin position="81"/>
        <end position="83"/>
    </location>
</feature>
<feature type="strand" evidence="21">
    <location>
        <begin position="86"/>
        <end position="94"/>
    </location>
</feature>
<feature type="turn" evidence="21">
    <location>
        <begin position="95"/>
        <end position="97"/>
    </location>
</feature>
<feature type="strand" evidence="21">
    <location>
        <begin position="98"/>
        <end position="107"/>
    </location>
</feature>
<feature type="strand" evidence="21">
    <location>
        <begin position="117"/>
        <end position="121"/>
    </location>
</feature>
<feature type="strand" evidence="21">
    <location>
        <begin position="128"/>
        <end position="133"/>
    </location>
</feature>
<feature type="strand" evidence="21">
    <location>
        <begin position="135"/>
        <end position="142"/>
    </location>
</feature>
<feature type="strand" evidence="21">
    <location>
        <begin position="145"/>
        <end position="152"/>
    </location>
</feature>
<feature type="turn" evidence="21">
    <location>
        <begin position="153"/>
        <end position="156"/>
    </location>
</feature>
<feature type="strand" evidence="21">
    <location>
        <begin position="157"/>
        <end position="162"/>
    </location>
</feature>
<feature type="strand" evidence="21">
    <location>
        <begin position="165"/>
        <end position="170"/>
    </location>
</feature>
<feature type="strand" evidence="21">
    <location>
        <begin position="172"/>
        <end position="174"/>
    </location>
</feature>
<feature type="strand" evidence="21">
    <location>
        <begin position="225"/>
        <end position="232"/>
    </location>
</feature>
<feature type="strand" evidence="21">
    <location>
        <begin position="244"/>
        <end position="251"/>
    </location>
</feature>
<feature type="strand" evidence="21">
    <location>
        <begin position="255"/>
        <end position="258"/>
    </location>
</feature>
<feature type="strand" evidence="21">
    <location>
        <begin position="272"/>
        <end position="274"/>
    </location>
</feature>
<feature type="strand" evidence="21">
    <location>
        <begin position="277"/>
        <end position="279"/>
    </location>
</feature>
<feature type="strand" evidence="21">
    <location>
        <begin position="289"/>
        <end position="291"/>
    </location>
</feature>
<feature type="strand" evidence="21">
    <location>
        <begin position="301"/>
        <end position="305"/>
    </location>
</feature>
<feature type="strand" evidence="21">
    <location>
        <begin position="312"/>
        <end position="315"/>
    </location>
</feature>
<feature type="strand" evidence="21">
    <location>
        <begin position="321"/>
        <end position="327"/>
    </location>
</feature>
<feature type="strand" evidence="21">
    <location>
        <begin position="350"/>
        <end position="360"/>
    </location>
</feature>
<feature type="strand" evidence="21">
    <location>
        <begin position="362"/>
        <end position="367"/>
    </location>
</feature>
<feature type="helix" evidence="21">
    <location>
        <begin position="372"/>
        <end position="382"/>
    </location>
</feature>
<feature type="helix" evidence="21">
    <location>
        <begin position="391"/>
        <end position="394"/>
    </location>
</feature>
<feature type="strand" evidence="21">
    <location>
        <begin position="397"/>
        <end position="399"/>
    </location>
</feature>
<feature type="helix" evidence="21">
    <location>
        <begin position="406"/>
        <end position="418"/>
    </location>
</feature>
<feature type="strand" evidence="21">
    <location>
        <begin position="425"/>
        <end position="427"/>
    </location>
</feature>
<feature type="helix" evidence="21">
    <location>
        <begin position="430"/>
        <end position="432"/>
    </location>
</feature>
<feature type="turn" evidence="21">
    <location>
        <begin position="443"/>
        <end position="445"/>
    </location>
</feature>
<feature type="helix" evidence="21">
    <location>
        <begin position="449"/>
        <end position="451"/>
    </location>
</feature>
<feature type="helix" evidence="21">
    <location>
        <begin position="454"/>
        <end position="458"/>
    </location>
</feature>
<feature type="strand" evidence="21">
    <location>
        <begin position="462"/>
        <end position="466"/>
    </location>
</feature>
<feature type="strand" evidence="22">
    <location>
        <begin position="475"/>
        <end position="477"/>
    </location>
</feature>
<feature type="helix" evidence="21">
    <location>
        <begin position="478"/>
        <end position="483"/>
    </location>
</feature>
<feature type="turn" evidence="21">
    <location>
        <begin position="484"/>
        <end position="487"/>
    </location>
</feature>
<feature type="strand" evidence="21">
    <location>
        <begin position="493"/>
        <end position="497"/>
    </location>
</feature>
<feature type="strand" evidence="21">
    <location>
        <begin position="503"/>
        <end position="508"/>
    </location>
</feature>
<feature type="helix" evidence="21">
    <location>
        <begin position="515"/>
        <end position="523"/>
    </location>
</feature>
<feature type="turn" evidence="21">
    <location>
        <begin position="527"/>
        <end position="529"/>
    </location>
</feature>
<feature type="strand" evidence="21">
    <location>
        <begin position="537"/>
        <end position="541"/>
    </location>
</feature>
<feature type="turn" evidence="21">
    <location>
        <begin position="544"/>
        <end position="546"/>
    </location>
</feature>
<feature type="strand" evidence="22">
    <location>
        <begin position="549"/>
        <end position="552"/>
    </location>
</feature>
<feature type="helix" evidence="21">
    <location>
        <begin position="563"/>
        <end position="565"/>
    </location>
</feature>
<feature type="turn" evidence="21">
    <location>
        <begin position="568"/>
        <end position="570"/>
    </location>
</feature>
<feature type="helix" evidence="21">
    <location>
        <begin position="572"/>
        <end position="591"/>
    </location>
</feature>
<feature type="strand" evidence="21">
    <location>
        <begin position="599"/>
        <end position="603"/>
    </location>
</feature>
<feature type="helix" evidence="21">
    <location>
        <begin position="608"/>
        <end position="610"/>
    </location>
</feature>
<feature type="strand" evidence="21">
    <location>
        <begin position="613"/>
        <end position="615"/>
    </location>
</feature>
<feature type="strand" evidence="21">
    <location>
        <begin position="620"/>
        <end position="622"/>
    </location>
</feature>
<feature type="helix" evidence="21">
    <location>
        <begin position="623"/>
        <end position="627"/>
    </location>
</feature>
<feature type="helix" evidence="21">
    <location>
        <begin position="629"/>
        <end position="638"/>
    </location>
</feature>
<feature type="strand" evidence="21">
    <location>
        <begin position="651"/>
        <end position="653"/>
    </location>
</feature>
<feature type="helix" evidence="21">
    <location>
        <begin position="657"/>
        <end position="667"/>
    </location>
</feature>
<feature type="strand" evidence="21">
    <location>
        <begin position="679"/>
        <end position="681"/>
    </location>
</feature>
<feature type="helix" evidence="21">
    <location>
        <begin position="686"/>
        <end position="688"/>
    </location>
</feature>
<feature type="helix" evidence="21">
    <location>
        <begin position="691"/>
        <end position="706"/>
    </location>
</feature>
<feature type="helix" evidence="21">
    <location>
        <begin position="708"/>
        <end position="720"/>
    </location>
</feature>
<feature type="strand" evidence="21">
    <location>
        <begin position="725"/>
        <end position="727"/>
    </location>
</feature>
<feature type="helix" evidence="21">
    <location>
        <begin position="729"/>
        <end position="732"/>
    </location>
</feature>
<feature type="helix" evidence="21">
    <location>
        <begin position="739"/>
        <end position="741"/>
    </location>
</feature>
<feature type="strand" evidence="21">
    <location>
        <begin position="746"/>
        <end position="748"/>
    </location>
</feature>
<feature type="turn" evidence="21">
    <location>
        <begin position="749"/>
        <end position="751"/>
    </location>
</feature>
<feature type="strand" evidence="21">
    <location>
        <begin position="752"/>
        <end position="754"/>
    </location>
</feature>
<feature type="strand" evidence="21">
    <location>
        <begin position="764"/>
        <end position="769"/>
    </location>
</feature>
<feature type="strand" evidence="21">
    <location>
        <begin position="775"/>
        <end position="778"/>
    </location>
</feature>
<feature type="turn" evidence="21">
    <location>
        <begin position="779"/>
        <end position="781"/>
    </location>
</feature>
<feature type="strand" evidence="21">
    <location>
        <begin position="784"/>
        <end position="794"/>
    </location>
</feature>
<feature type="strand" evidence="21">
    <location>
        <begin position="802"/>
        <end position="805"/>
    </location>
</feature>
<feature type="strand" evidence="21">
    <location>
        <begin position="808"/>
        <end position="812"/>
    </location>
</feature>
<feature type="turn" evidence="21">
    <location>
        <begin position="820"/>
        <end position="822"/>
    </location>
</feature>
<feature type="helix" evidence="21">
    <location>
        <begin position="823"/>
        <end position="825"/>
    </location>
</feature>
<feature type="strand" evidence="21">
    <location>
        <begin position="828"/>
        <end position="833"/>
    </location>
</feature>
<feature type="strand" evidence="21">
    <location>
        <begin position="840"/>
        <end position="846"/>
    </location>
</feature>
<feature type="strand" evidence="21">
    <location>
        <begin position="849"/>
        <end position="851"/>
    </location>
</feature>
<feature type="helix" evidence="21">
    <location>
        <begin position="853"/>
        <end position="856"/>
    </location>
</feature>
<feature type="strand" evidence="21">
    <location>
        <begin position="861"/>
        <end position="868"/>
    </location>
</feature>
<feature type="strand" evidence="21">
    <location>
        <begin position="871"/>
        <end position="877"/>
    </location>
</feature>
<feature type="strand" evidence="21">
    <location>
        <begin position="888"/>
        <end position="895"/>
    </location>
</feature>
<feature type="strand" evidence="21">
    <location>
        <begin position="903"/>
        <end position="906"/>
    </location>
</feature>
<feature type="strand" evidence="21">
    <location>
        <begin position="908"/>
        <end position="910"/>
    </location>
</feature>
<feature type="strand" evidence="21">
    <location>
        <begin position="916"/>
        <end position="920"/>
    </location>
</feature>
<feature type="turn" evidence="21">
    <location>
        <begin position="921"/>
        <end position="924"/>
    </location>
</feature>
<feature type="strand" evidence="21">
    <location>
        <begin position="925"/>
        <end position="937"/>
    </location>
</feature>
<feature type="strand" evidence="21">
    <location>
        <begin position="939"/>
        <end position="943"/>
    </location>
</feature>
<accession>Q14697</accession>
<accession>A6NC20</accession>
<accession>Q8WTS9</accession>
<accession>Q9P0X0</accession>
<organism>
    <name type="scientific">Homo sapiens</name>
    <name type="common">Human</name>
    <dbReference type="NCBI Taxonomy" id="9606"/>
    <lineage>
        <taxon>Eukaryota</taxon>
        <taxon>Metazoa</taxon>
        <taxon>Chordata</taxon>
        <taxon>Craniata</taxon>
        <taxon>Vertebrata</taxon>
        <taxon>Euteleostomi</taxon>
        <taxon>Mammalia</taxon>
        <taxon>Eutheria</taxon>
        <taxon>Euarchontoglires</taxon>
        <taxon>Primates</taxon>
        <taxon>Haplorrhini</taxon>
        <taxon>Catarrhini</taxon>
        <taxon>Hominidae</taxon>
        <taxon>Homo</taxon>
    </lineage>
</organism>
<gene>
    <name evidence="16 19" type="primary">GANAB</name>
    <name type="synonym">G2AN</name>
    <name type="synonym">KIAA0088</name>
</gene>
<evidence type="ECO:0000250" key="1">
    <source>
        <dbReference type="UniProtKB" id="P79403"/>
    </source>
</evidence>
<evidence type="ECO:0000250" key="2">
    <source>
        <dbReference type="UniProtKB" id="Q8BHN3"/>
    </source>
</evidence>
<evidence type="ECO:0000255" key="3"/>
<evidence type="ECO:0000256" key="4">
    <source>
        <dbReference type="SAM" id="MobiDB-lite"/>
    </source>
</evidence>
<evidence type="ECO:0000269" key="5">
    <source>
    </source>
</evidence>
<evidence type="ECO:0000269" key="6">
    <source>
    </source>
</evidence>
<evidence type="ECO:0000269" key="7">
    <source>
    </source>
</evidence>
<evidence type="ECO:0000269" key="8">
    <source>
    </source>
</evidence>
<evidence type="ECO:0000269" key="9">
    <source>
    </source>
</evidence>
<evidence type="ECO:0000269" key="10">
    <source>
    </source>
</evidence>
<evidence type="ECO:0000269" key="11">
    <source>
    </source>
</evidence>
<evidence type="ECO:0000269" key="12">
    <source ref="1"/>
</evidence>
<evidence type="ECO:0000303" key="13">
    <source>
    </source>
</evidence>
<evidence type="ECO:0000303" key="14">
    <source>
    </source>
</evidence>
<evidence type="ECO:0000303" key="15">
    <source>
    </source>
</evidence>
<evidence type="ECO:0000303" key="16">
    <source>
    </source>
</evidence>
<evidence type="ECO:0000305" key="17"/>
<evidence type="ECO:0000305" key="18">
    <source>
    </source>
</evidence>
<evidence type="ECO:0000312" key="19">
    <source>
        <dbReference type="HGNC" id="HGNC:4138"/>
    </source>
</evidence>
<evidence type="ECO:0007744" key="20">
    <source>
    </source>
</evidence>
<evidence type="ECO:0007829" key="21">
    <source>
        <dbReference type="PDB" id="8D43"/>
    </source>
</evidence>
<evidence type="ECO:0007829" key="22">
    <source>
        <dbReference type="PDB" id="8EMR"/>
    </source>
</evidence>
<comment type="function">
    <text evidence="5 7">Catalytic subunit of glucosidase II that cleaves sequentially the 2 innermost alpha-1,3-linked glucose residues from the Glc(2)Man(9)GlcNAc(2) oligosaccharide precursor of immature glycoproteins (PubMed:10929008). Required for PKD1/Polycystin-1 and PKD2/Polycystin-2 maturation and localization to the cell surface and cilia (PubMed:27259053).</text>
</comment>
<comment type="catalytic activity">
    <reaction evidence="5">
        <text>N(4)-(alpha-D-Glc-(1-&gt;3)-alpha-D-Man-(1-&gt;2)-alpha-D-Man-(1-&gt;2)-alpha-D-Man-(1-&gt;3)-[alpha-D-Man-(1-&gt;2)-alpha-D-Man-(1-&gt;3)-[alpha-D-Man-(1-&gt;2)-alpha-D-Man-(1-&gt;6)]-alpha-D-Man-(1-&gt;6)]-beta-D-Man-(1-&gt;4)-beta-D-GlcNAc-(1-&gt;4)-beta-D-GlcNAc)-L-asparaginyl-[protein] + H2O = N(4)-(alpha-D-Man-(1-&gt;2)-alpha-D-Man-(1-&gt;2)-alpha-D-Man-(1-&gt;3)-[alpha-D-Man-(1-&gt;2)-alpha-D-Man-(1-&gt;3)-[alpha-D-Man-(1-&gt;2)-alpha-D-Man-(1-&gt;6)]-alpha-D-Man-(1-&gt;6)]-beta-D-Man-(1-&gt;4)-beta-D-GlcNAc-(1-&gt;4)-beta-D-GlcNAc)-L-asparaginyl-[protein] (N-glucan mannose isomer 9A1,2,3B1,2,3) + beta-D-glucose</text>
        <dbReference type="Rhea" id="RHEA:56000"/>
        <dbReference type="Rhea" id="RHEA-COMP:14356"/>
        <dbReference type="Rhea" id="RHEA-COMP:14357"/>
        <dbReference type="ChEBI" id="CHEBI:15377"/>
        <dbReference type="ChEBI" id="CHEBI:15903"/>
        <dbReference type="ChEBI" id="CHEBI:59080"/>
        <dbReference type="ChEBI" id="CHEBI:139493"/>
        <dbReference type="EC" id="3.2.1.207"/>
    </reaction>
</comment>
<comment type="catalytic activity">
    <reaction evidence="5">
        <text>N(4)-(alpha-D-Glc-(1-&gt;3)-alpha-D-Glc-(1-&gt;3)-alpha-D-Man-(1-&gt;2)-alpha-D-Man-(1-&gt;2)-alpha-D-Man-(1-&gt;3)-[alpha-D-Man-(1-&gt;2)-alpha-D-Man-(1-&gt;3)-[alpha-D-Man-(1-&gt;2)-alpha-D-Man-(1-&gt;6)]-alpha-D-Man-(1-&gt;6)]-beta-D-Man-(1-&gt;4)-beta-D-GlcNAc-(1-&gt;4)-beta-D-GlcNAc)-L-asparaginyl-[protein] + H2O = N(4)-(alpha-D-Glc-(1-&gt;3)-alpha-D-Man-(1-&gt;2)-alpha-D-Man-(1-&gt;2)-alpha-D-Man-(1-&gt;3)-[alpha-D-Man-(1-&gt;2)-alpha-D-Man-(1-&gt;3)-[alpha-D-Man-(1-&gt;2)-alpha-D-Man-(1-&gt;6)]-alpha-D-Man-(1-&gt;6)]-beta-D-Man-(1-&gt;4)-beta-D-GlcNAc-(1-&gt;4)-beta-D-GlcNAc)-L-asparaginyl-[protein] + beta-D-glucose</text>
        <dbReference type="Rhea" id="RHEA:55996"/>
        <dbReference type="Rhea" id="RHEA-COMP:14355"/>
        <dbReference type="Rhea" id="RHEA-COMP:14357"/>
        <dbReference type="ChEBI" id="CHEBI:15377"/>
        <dbReference type="ChEBI" id="CHEBI:15903"/>
        <dbReference type="ChEBI" id="CHEBI:59080"/>
        <dbReference type="ChEBI" id="CHEBI:59082"/>
        <dbReference type="EC" id="3.2.1.207"/>
    </reaction>
</comment>
<comment type="activity regulation">
    <text evidence="5">Inhibited by deoxynojirimycin.</text>
</comment>
<comment type="pathway">
    <text evidence="5">Glycan metabolism; N-glycan metabolism.</text>
</comment>
<comment type="subunit">
    <text evidence="2 5">Heterodimer of a catalytic alpha subunit (GANAB) and a beta subunit (PRKCSH) (PubMed:10929008). Binds glycosylated PTPRC (By similarity).</text>
</comment>
<comment type="interaction">
    <interactant intactId="EBI-11614043">
        <id>Q14697-1</id>
    </interactant>
    <interactant intactId="EBI-716953">
        <id>P14314</id>
        <label>PRKCSH</label>
    </interactant>
    <organismsDiffer>false</organismsDiffer>
    <experiments>3</experiments>
</comment>
<comment type="interaction">
    <interactant intactId="EBI-16399534">
        <id>Q14697-2</id>
    </interactant>
    <interactant intactId="EBI-716953">
        <id>P14314</id>
        <label>PRKCSH</label>
    </interactant>
    <organismsDiffer>false</organismsDiffer>
    <experiments>2</experiments>
</comment>
<comment type="subcellular location">
    <subcellularLocation>
        <location evidence="9 18">Endoplasmic reticulum</location>
    </subcellularLocation>
    <subcellularLocation>
        <location evidence="1">Golgi apparatus</location>
    </subcellularLocation>
    <subcellularLocation>
        <location evidence="6">Melanosome</location>
    </subcellularLocation>
    <text evidence="6">Identified by mass spectrometry in melanosome fractions from stage I to stage IV.</text>
</comment>
<comment type="alternative products">
    <event type="alternative splicing"/>
    <isoform>
        <id>Q14697-1</id>
        <name>1</name>
        <sequence type="displayed"/>
    </isoform>
    <isoform>
        <id>Q14697-2</id>
        <name>2</name>
        <sequence type="described" ref="VSP_010674"/>
    </isoform>
    <isoform>
        <id>Q14697-3</id>
        <name>3</name>
        <sequence type="described" ref="VSP_039976 VSP_039977"/>
    </isoform>
</comment>
<comment type="tissue specificity">
    <text evidence="7 10">Detected in placenta (PubMed:3881423). Isoform 1 and isoform 2 are expressed in the kidney and liver (PubMed:27259053).</text>
</comment>
<comment type="disease" evidence="7 9">
    <disease id="DI-04789">
        <name>Polycystic kidney disease 3 with or without polycystic liver disease</name>
        <acronym>PKD3</acronym>
        <description>A form of polycystic kidney disease, a disorder characterized by progressive formation and enlargement of cysts in both kidneys, typically leading to end-stage renal disease in adult life. Cysts also occur in other organs, particularly the liver. PKD3 inheritance is autosomal dominant.</description>
        <dbReference type="MIM" id="600666"/>
    </disease>
    <text>The disease is caused by variants affecting the gene represented in this entry.</text>
</comment>
<comment type="disease">
    <text evidence="8 9">GANAB variations may act as a disease modifier in autosomal dominant polycystic liver disease in patients who have causative mutations in other genes, such as PKHD1 or ALG8.</text>
</comment>
<comment type="miscellaneous">
    <molecule>Isoform 3</molecule>
    <text evidence="17">May be produced at very low levels due to a premature stop codon in the mRNA, leading to nonsense-mediated mRNA decay.</text>
</comment>
<comment type="similarity">
    <text evidence="17">Belongs to the glycosyl hydrolase 31 family.</text>
</comment>
<comment type="sequence caution" evidence="17">
    <conflict type="erroneous translation">
        <sequence resource="EMBL-CDS" id="AAH65266"/>
    </conflict>
    <text>Wrong choice of CDS.</text>
</comment>
<dbReference type="EC" id="3.2.1.207" evidence="5"/>
<dbReference type="EMBL" id="AJ000332">
    <property type="protein sequence ID" value="CAA04006.1"/>
    <property type="molecule type" value="mRNA"/>
</dbReference>
<dbReference type="EMBL" id="AF144074">
    <property type="protein sequence ID" value="AAF66685.1"/>
    <property type="molecule type" value="mRNA"/>
</dbReference>
<dbReference type="EMBL" id="AP001458">
    <property type="status" value="NOT_ANNOTATED_CDS"/>
    <property type="molecule type" value="Genomic_DNA"/>
</dbReference>
<dbReference type="EMBL" id="D42041">
    <property type="protein sequence ID" value="BAA07642.1"/>
    <property type="molecule type" value="mRNA"/>
</dbReference>
<dbReference type="EMBL" id="BC017433">
    <property type="protein sequence ID" value="AAH17433.2"/>
    <property type="molecule type" value="mRNA"/>
</dbReference>
<dbReference type="EMBL" id="BC017435">
    <property type="protein sequence ID" value="AAH17435.2"/>
    <property type="molecule type" value="mRNA"/>
</dbReference>
<dbReference type="EMBL" id="BC065266">
    <property type="protein sequence ID" value="AAH65266.1"/>
    <property type="status" value="ALT_SEQ"/>
    <property type="molecule type" value="mRNA"/>
</dbReference>
<dbReference type="CCDS" id="CCDS41656.1">
    <molecule id="Q14697-2"/>
</dbReference>
<dbReference type="CCDS" id="CCDS8026.1">
    <molecule id="Q14697-1"/>
</dbReference>
<dbReference type="RefSeq" id="NP_001265121.1">
    <property type="nucleotide sequence ID" value="NM_001278192.1"/>
</dbReference>
<dbReference type="RefSeq" id="NP_001265122.1">
    <property type="nucleotide sequence ID" value="NM_001278193.1"/>
</dbReference>
<dbReference type="RefSeq" id="NP_001265123.1">
    <property type="nucleotide sequence ID" value="NM_001278194.1"/>
</dbReference>
<dbReference type="RefSeq" id="NP_938148.1">
    <molecule id="Q14697-1"/>
    <property type="nucleotide sequence ID" value="NM_198334.3"/>
</dbReference>
<dbReference type="RefSeq" id="NP_938149.2">
    <molecule id="Q14697-2"/>
    <property type="nucleotide sequence ID" value="NM_198335.4"/>
</dbReference>
<dbReference type="PDB" id="8D43">
    <property type="method" value="EM"/>
    <property type="resolution" value="2.88 A"/>
    <property type="chains" value="A=1-944"/>
</dbReference>
<dbReference type="PDB" id="8EMR">
    <property type="method" value="EM"/>
    <property type="resolution" value="2.92 A"/>
    <property type="chains" value="A=1-944"/>
</dbReference>
<dbReference type="PDBsum" id="8D43"/>
<dbReference type="PDBsum" id="8EMR"/>
<dbReference type="EMDB" id="EMD-27173"/>
<dbReference type="EMDB" id="EMD-28262"/>
<dbReference type="SMR" id="Q14697"/>
<dbReference type="BioGRID" id="116802">
    <property type="interactions" value="402"/>
</dbReference>
<dbReference type="ComplexPortal" id="CPX-6822">
    <property type="entry name" value="Glucosidase II complex"/>
</dbReference>
<dbReference type="FunCoup" id="Q14697">
    <property type="interactions" value="3113"/>
</dbReference>
<dbReference type="IntAct" id="Q14697">
    <property type="interactions" value="124"/>
</dbReference>
<dbReference type="MINT" id="Q14697"/>
<dbReference type="STRING" id="9606.ENSP00000340466"/>
<dbReference type="BindingDB" id="Q14697"/>
<dbReference type="ChEMBL" id="CHEMBL2519"/>
<dbReference type="DrugBank" id="DB01841">
    <property type="generic name" value="4,6-Dideoxyglucose"/>
</dbReference>
<dbReference type="DrugBank" id="DB06645">
    <property type="generic name" value="Anamorelin"/>
</dbReference>
<dbReference type="DrugBank" id="DB02379">
    <property type="generic name" value="Beta-D-Glucose"/>
</dbReference>
<dbReference type="DrugBank" id="DB03206">
    <property type="generic name" value="Duvoglustat"/>
</dbReference>
<dbReference type="DrugBank" id="DB00491">
    <property type="generic name" value="Miglitol"/>
</dbReference>
<dbReference type="DrugBank" id="DB14128">
    <property type="generic name" value="Nadide"/>
</dbReference>
<dbReference type="CAZy" id="GH31">
    <property type="family name" value="Glycoside Hydrolase Family 31"/>
</dbReference>
<dbReference type="GlyConnect" id="1560">
    <molecule id="Q14697-2"/>
    <property type="glycosylation" value="2 N-Linked glycans (1 site)"/>
</dbReference>
<dbReference type="GlyCosmos" id="Q14697">
    <property type="glycosylation" value="1 site, No reported glycans"/>
</dbReference>
<dbReference type="GlyGen" id="Q14697">
    <property type="glycosylation" value="2 sites, 1 N-linked glycan (1 site), 1 O-linked glycan (1 site)"/>
</dbReference>
<dbReference type="iPTMnet" id="Q14697"/>
<dbReference type="MetOSite" id="Q14697"/>
<dbReference type="PhosphoSitePlus" id="Q14697"/>
<dbReference type="SwissPalm" id="Q14697"/>
<dbReference type="BioMuta" id="GANAB"/>
<dbReference type="DMDM" id="54037162"/>
<dbReference type="REPRODUCTION-2DPAGE" id="IPI00383581"/>
<dbReference type="jPOST" id="Q14697"/>
<dbReference type="MassIVE" id="Q14697"/>
<dbReference type="PaxDb" id="9606-ENSP00000340466"/>
<dbReference type="PeptideAtlas" id="Q14697"/>
<dbReference type="PRIDE" id="Q14697"/>
<dbReference type="ProteomicsDB" id="60137">
    <molecule id="Q14697-1"/>
</dbReference>
<dbReference type="ProteomicsDB" id="60138">
    <molecule id="Q14697-2"/>
</dbReference>
<dbReference type="ProteomicsDB" id="60139">
    <molecule id="Q14697-3"/>
</dbReference>
<dbReference type="Pumba" id="Q14697"/>
<dbReference type="TopDownProteomics" id="Q14697-1">
    <molecule id="Q14697-1"/>
</dbReference>
<dbReference type="Antibodypedia" id="14863">
    <property type="antibodies" value="195 antibodies from 29 providers"/>
</dbReference>
<dbReference type="DNASU" id="23193"/>
<dbReference type="Ensembl" id="ENST00000346178.8">
    <molecule id="Q14697-2"/>
    <property type="protein sequence ID" value="ENSP00000340466.4"/>
    <property type="gene ID" value="ENSG00000089597.18"/>
</dbReference>
<dbReference type="Ensembl" id="ENST00000356638.8">
    <molecule id="Q14697-1"/>
    <property type="protein sequence ID" value="ENSP00000349053.3"/>
    <property type="gene ID" value="ENSG00000089597.18"/>
</dbReference>
<dbReference type="Ensembl" id="ENST00000526210.1">
    <molecule id="Q14697-3"/>
    <property type="protein sequence ID" value="ENSP00000433799.1"/>
    <property type="gene ID" value="ENSG00000089597.18"/>
</dbReference>
<dbReference type="Ensembl" id="ENST00000532402.5">
    <molecule id="Q14697-3"/>
    <property type="protein sequence ID" value="ENSP00000432181.1"/>
    <property type="gene ID" value="ENSG00000089597.18"/>
</dbReference>
<dbReference type="Ensembl" id="ENST00000534613.5">
    <molecule id="Q14697-3"/>
    <property type="protein sequence ID" value="ENSP00000434921.1"/>
    <property type="gene ID" value="ENSG00000089597.18"/>
</dbReference>
<dbReference type="GeneID" id="23193"/>
<dbReference type="KEGG" id="hsa:23193"/>
<dbReference type="MANE-Select" id="ENST00000356638.8">
    <property type="protein sequence ID" value="ENSP00000349053.3"/>
    <property type="RefSeq nucleotide sequence ID" value="NM_198334.3"/>
    <property type="RefSeq protein sequence ID" value="NP_938148.1"/>
</dbReference>
<dbReference type="UCSC" id="uc001nua.5">
    <molecule id="Q14697-1"/>
    <property type="organism name" value="human"/>
</dbReference>
<dbReference type="AGR" id="HGNC:4138"/>
<dbReference type="CTD" id="23193"/>
<dbReference type="DisGeNET" id="23193"/>
<dbReference type="GeneCards" id="GANAB"/>
<dbReference type="GeneReviews" id="GANAB"/>
<dbReference type="HGNC" id="HGNC:4138">
    <property type="gene designation" value="GANAB"/>
</dbReference>
<dbReference type="HPA" id="ENSG00000089597">
    <property type="expression patterns" value="Low tissue specificity"/>
</dbReference>
<dbReference type="MalaCards" id="GANAB"/>
<dbReference type="MIM" id="104160">
    <property type="type" value="gene"/>
</dbReference>
<dbReference type="MIM" id="600666">
    <property type="type" value="phenotype"/>
</dbReference>
<dbReference type="MIM" id="617874">
    <property type="type" value="phenotype"/>
</dbReference>
<dbReference type="neXtProt" id="NX_Q14697"/>
<dbReference type="OpenTargets" id="ENSG00000089597"/>
<dbReference type="Orphanet" id="730">
    <property type="disease" value="Autosomal dominant polycystic kidney disease"/>
</dbReference>
<dbReference type="PharmGKB" id="PA28551"/>
<dbReference type="VEuPathDB" id="HostDB:ENSG00000089597"/>
<dbReference type="eggNOG" id="KOG1066">
    <property type="taxonomic scope" value="Eukaryota"/>
</dbReference>
<dbReference type="GeneTree" id="ENSGT00940000159139"/>
<dbReference type="HOGENOM" id="CLU_3086528_0_0_1"/>
<dbReference type="InParanoid" id="Q14697"/>
<dbReference type="OMA" id="TVHQPLW"/>
<dbReference type="OrthoDB" id="3237269at2759"/>
<dbReference type="PAN-GO" id="Q14697">
    <property type="GO annotations" value="3 GO annotations based on evolutionary models"/>
</dbReference>
<dbReference type="PhylomeDB" id="Q14697"/>
<dbReference type="TreeFam" id="TF300337"/>
<dbReference type="BioCyc" id="MetaCyc:HS01658-MONOMER"/>
<dbReference type="BRENDA" id="3.2.1.207">
    <property type="organism ID" value="2681"/>
</dbReference>
<dbReference type="PathwayCommons" id="Q14697"/>
<dbReference type="Reactome" id="R-HSA-532668">
    <property type="pathway name" value="N-glycan trimming in the ER and Calnexin/Calreticulin cycle"/>
</dbReference>
<dbReference type="Reactome" id="R-HSA-901042">
    <property type="pathway name" value="Calnexin/calreticulin cycle"/>
</dbReference>
<dbReference type="Reactome" id="R-HSA-9683686">
    <property type="pathway name" value="Maturation of spike protein"/>
</dbReference>
<dbReference type="Reactome" id="R-HSA-9694548">
    <property type="pathway name" value="Maturation of spike protein"/>
</dbReference>
<dbReference type="SignaLink" id="Q14697"/>
<dbReference type="UniPathway" id="UPA00957"/>
<dbReference type="BioGRID-ORCS" id="23193">
    <property type="hits" value="83 hits in 1166 CRISPR screens"/>
</dbReference>
<dbReference type="CD-CODE" id="91857CE7">
    <property type="entry name" value="Nucleolus"/>
</dbReference>
<dbReference type="ChiTaRS" id="GANAB">
    <property type="organism name" value="human"/>
</dbReference>
<dbReference type="GeneWiki" id="GANAB"/>
<dbReference type="GenomeRNAi" id="23193"/>
<dbReference type="Pharos" id="Q14697">
    <property type="development level" value="Tchem"/>
</dbReference>
<dbReference type="PRO" id="PR:Q14697"/>
<dbReference type="Proteomes" id="UP000005640">
    <property type="component" value="Chromosome 11"/>
</dbReference>
<dbReference type="RNAct" id="Q14697">
    <property type="molecule type" value="protein"/>
</dbReference>
<dbReference type="Bgee" id="ENSG00000089597">
    <property type="expression patterns" value="Expressed in stromal cell of endometrium and 210 other cell types or tissues"/>
</dbReference>
<dbReference type="ExpressionAtlas" id="Q14697">
    <property type="expression patterns" value="baseline and differential"/>
</dbReference>
<dbReference type="GO" id="GO:0005783">
    <property type="term" value="C:endoplasmic reticulum"/>
    <property type="evidence" value="ECO:0000314"/>
    <property type="project" value="HPA"/>
</dbReference>
<dbReference type="GO" id="GO:0005788">
    <property type="term" value="C:endoplasmic reticulum lumen"/>
    <property type="evidence" value="ECO:0000304"/>
    <property type="project" value="Reactome"/>
</dbReference>
<dbReference type="GO" id="GO:0070062">
    <property type="term" value="C:extracellular exosome"/>
    <property type="evidence" value="ECO:0007005"/>
    <property type="project" value="UniProtKB"/>
</dbReference>
<dbReference type="GO" id="GO:0017177">
    <property type="term" value="C:glucosidase II complex"/>
    <property type="evidence" value="ECO:0000314"/>
    <property type="project" value="UniProtKB"/>
</dbReference>
<dbReference type="GO" id="GO:0005794">
    <property type="term" value="C:Golgi apparatus"/>
    <property type="evidence" value="ECO:0007669"/>
    <property type="project" value="UniProtKB-SubCell"/>
</dbReference>
<dbReference type="GO" id="GO:0043231">
    <property type="term" value="C:intracellular membrane-bounded organelle"/>
    <property type="evidence" value="ECO:0000315"/>
    <property type="project" value="UniProtKB"/>
</dbReference>
<dbReference type="GO" id="GO:0042470">
    <property type="term" value="C:melanosome"/>
    <property type="evidence" value="ECO:0007669"/>
    <property type="project" value="UniProtKB-SubCell"/>
</dbReference>
<dbReference type="GO" id="GO:0016020">
    <property type="term" value="C:membrane"/>
    <property type="evidence" value="ECO:0007005"/>
    <property type="project" value="UniProtKB"/>
</dbReference>
<dbReference type="GO" id="GO:0090599">
    <property type="term" value="F:alpha-glucosidase activity"/>
    <property type="evidence" value="ECO:0000314"/>
    <property type="project" value="UniProtKB"/>
</dbReference>
<dbReference type="GO" id="GO:0030246">
    <property type="term" value="F:carbohydrate binding"/>
    <property type="evidence" value="ECO:0007669"/>
    <property type="project" value="InterPro"/>
</dbReference>
<dbReference type="GO" id="GO:0106407">
    <property type="term" value="F:Glc2Man9GlcNAc2 oligosaccharide glucosidase activity"/>
    <property type="evidence" value="ECO:0007669"/>
    <property type="project" value="UniProtKB-EC"/>
</dbReference>
<dbReference type="GO" id="GO:0033919">
    <property type="term" value="F:glucan 1,3-alpha-glucosidase activity"/>
    <property type="evidence" value="ECO:0000314"/>
    <property type="project" value="UniProtKB"/>
</dbReference>
<dbReference type="GO" id="GO:0003723">
    <property type="term" value="F:RNA binding"/>
    <property type="evidence" value="ECO:0007005"/>
    <property type="project" value="UniProtKB"/>
</dbReference>
<dbReference type="GO" id="GO:0005975">
    <property type="term" value="P:carbohydrate metabolic process"/>
    <property type="evidence" value="ECO:0007669"/>
    <property type="project" value="InterPro"/>
</dbReference>
<dbReference type="GO" id="GO:0006491">
    <property type="term" value="P:N-glycan processing"/>
    <property type="evidence" value="ECO:0000314"/>
    <property type="project" value="UniProtKB"/>
</dbReference>
<dbReference type="CDD" id="cd06603">
    <property type="entry name" value="GH31_GANC_GANAB_alpha"/>
    <property type="match status" value="1"/>
</dbReference>
<dbReference type="CDD" id="cd14752">
    <property type="entry name" value="GH31_N"/>
    <property type="match status" value="1"/>
</dbReference>
<dbReference type="FunFam" id="3.20.20.80:FF:000046">
    <property type="entry name" value="Glucosidase alpha, neutral C"/>
    <property type="match status" value="1"/>
</dbReference>
<dbReference type="FunFam" id="3.20.20.80:FF:000039">
    <property type="entry name" value="Glucosidase, alpha neutral C"/>
    <property type="match status" value="1"/>
</dbReference>
<dbReference type="FunFam" id="2.60.40.1180:FF:000004">
    <property type="entry name" value="neutral alpha-glucosidase AB isoform X1"/>
    <property type="match status" value="1"/>
</dbReference>
<dbReference type="FunFam" id="2.60.40.1760:FF:000002">
    <property type="entry name" value="neutral alpha-glucosidase AB isoform X1"/>
    <property type="match status" value="1"/>
</dbReference>
<dbReference type="FunFam" id="2.60.40.1180:FF:000023">
    <property type="entry name" value="neutral alpha-glucosidase AB isoform X2"/>
    <property type="match status" value="1"/>
</dbReference>
<dbReference type="Gene3D" id="3.20.20.80">
    <property type="entry name" value="Glycosidases"/>
    <property type="match status" value="2"/>
</dbReference>
<dbReference type="Gene3D" id="2.60.40.1760">
    <property type="entry name" value="glycosyl hydrolase (family 31)"/>
    <property type="match status" value="1"/>
</dbReference>
<dbReference type="Gene3D" id="2.60.40.1180">
    <property type="entry name" value="Golgi alpha-mannosidase II"/>
    <property type="match status" value="2"/>
</dbReference>
<dbReference type="InterPro" id="IPR011013">
    <property type="entry name" value="Gal_mutarotase_sf_dom"/>
</dbReference>
<dbReference type="InterPro" id="IPR030458">
    <property type="entry name" value="Glyco_hydro_31_AS"/>
</dbReference>
<dbReference type="InterPro" id="IPR048395">
    <property type="entry name" value="Glyco_hydro_31_C"/>
</dbReference>
<dbReference type="InterPro" id="IPR030459">
    <property type="entry name" value="Glyco_hydro_31_CS"/>
</dbReference>
<dbReference type="InterPro" id="IPR025887">
    <property type="entry name" value="Glyco_hydro_31_N_dom"/>
</dbReference>
<dbReference type="InterPro" id="IPR000322">
    <property type="entry name" value="Glyco_hydro_31_TIM"/>
</dbReference>
<dbReference type="InterPro" id="IPR013780">
    <property type="entry name" value="Glyco_hydro_b"/>
</dbReference>
<dbReference type="InterPro" id="IPR017853">
    <property type="entry name" value="Glycoside_hydrolase_SF"/>
</dbReference>
<dbReference type="PANTHER" id="PTHR22762">
    <property type="entry name" value="ALPHA-GLUCOSIDASE"/>
    <property type="match status" value="1"/>
</dbReference>
<dbReference type="PANTHER" id="PTHR22762:SF162">
    <property type="entry name" value="NEUTRAL ALPHA-GLUCOSIDASE AB"/>
    <property type="match status" value="1"/>
</dbReference>
<dbReference type="Pfam" id="PF13802">
    <property type="entry name" value="Gal_mutarotas_2"/>
    <property type="match status" value="1"/>
</dbReference>
<dbReference type="Pfam" id="PF01055">
    <property type="entry name" value="Glyco_hydro_31_2nd"/>
    <property type="match status" value="1"/>
</dbReference>
<dbReference type="Pfam" id="PF21365">
    <property type="entry name" value="Glyco_hydro_31_3rd"/>
    <property type="match status" value="1"/>
</dbReference>
<dbReference type="SUPFAM" id="SSF51445">
    <property type="entry name" value="(Trans)glycosidases"/>
    <property type="match status" value="1"/>
</dbReference>
<dbReference type="SUPFAM" id="SSF74650">
    <property type="entry name" value="Galactose mutarotase-like"/>
    <property type="match status" value="1"/>
</dbReference>
<dbReference type="SUPFAM" id="SSF51011">
    <property type="entry name" value="Glycosyl hydrolase domain"/>
    <property type="match status" value="1"/>
</dbReference>
<dbReference type="PROSITE" id="PS00129">
    <property type="entry name" value="GLYCOSYL_HYDROL_F31_1"/>
    <property type="match status" value="1"/>
</dbReference>
<dbReference type="PROSITE" id="PS00707">
    <property type="entry name" value="GLYCOSYL_HYDROL_F31_2"/>
    <property type="match status" value="1"/>
</dbReference>
<keyword id="KW-0002">3D-structure</keyword>
<keyword id="KW-0025">Alternative splicing</keyword>
<keyword id="KW-0903">Direct protein sequencing</keyword>
<keyword id="KW-0225">Disease variant</keyword>
<keyword id="KW-1015">Disulfide bond</keyword>
<keyword id="KW-0256">Endoplasmic reticulum</keyword>
<keyword id="KW-0325">Glycoprotein</keyword>
<keyword id="KW-0326">Glycosidase</keyword>
<keyword id="KW-0333">Golgi apparatus</keyword>
<keyword id="KW-0378">Hydrolase</keyword>
<keyword id="KW-0597">Phosphoprotein</keyword>
<keyword id="KW-1267">Proteomics identification</keyword>
<keyword id="KW-1185">Reference proteome</keyword>
<keyword id="KW-0732">Signal</keyword>
<sequence length="944" mass="106874">MAAVAAVAARRRRSWASLVLAFLGVCLGITLAVDRSNFKTCEESSFCKRQRSIRPGLSPYRALLDSLQLGPDSLTVHLIHEVTKVLLVLELQGLQKNMTRFRIDELEPRRPRYRVPDVLVADPPIARLSVSGRDENSVELTMAEGPYKIILTARPFRLDLLEDRSLLLSVNARGLLEFEHQRAPRVSQGSKDPAEGDGAQPEETPRDGDKPEETQGKAEKDEPGAWEETFKTHSDSKPYGPMSVGLDFSLPGMEHVYGIPEHADNLRLKVTEGGEPYRLYNLDVFQYELYNPMALYGSVPVLLAHNPHRDLGIFWLNAAETWVDISSNTAGKTLFGKMMDYLQGSGETPQTDVRWMSETGIIDVFLLLGPSISDVFRQYASLTGTQALPPLFSLGYHQSRWNYRDEADVLEVDQGFDDHNLPCDVIWLDIEHADGKRYFTWDPSRFPQPRTMLERLASKRRKLVAIVDPHIKVDSGYRVHEELRNLGLYVKTRDGSDYEGWCWPGSAGYPDFTNPTMRAWWANMFSYDNYEGSAPNLFVWNDMNEPSVFNGPEVTMLKDAQHYGGWEHRDVHNIYGLYVHMATADGLRQRSGGMERPFVLARAFFAGSQRFGAVWTGDNTAEWDHLKISIPMCLSLGLVGLSFCGADVGGFFKNPEPELLVRWYQMGAYQPFFRAHAHLDTGRREPWLLPSQHNDIIRDALGQRYSLLPFWYTLLYQAHREGIPVMRPLWVQYPQDVTTFNIDDQYLLGDALLVHPVSDSGAHGVQVYLPGQGEVWYDIQSYQKHHGPQTLYLPVTLSSIPVFQRGGTIVPRWMRVRRSSECMKDDPITLFVALSPQGTAQGELFLDDGHTFNYQTRQEFLLRRFSFSGNTLVSSSADPEGHFETPIWIERVVIIGAGKPAAVVLQTKGSPESRLSFQHDPETSVLVLRKPGINVASDWSIHLR</sequence>
<proteinExistence type="evidence at protein level"/>
<name>GANAB_HUMAN</name>
<reference key="1">
    <citation type="submission" date="1997-07" db="EMBL/GenBank/DDBJ databases">
        <title>Sequence and analysis of the endoplasmic reticulum protein glucosidase II.</title>
        <authorList>
            <person name="Stuerzenhofecker B."/>
            <person name="Nguyenvan P."/>
            <person name="Soeling H.D."/>
        </authorList>
    </citation>
    <scope>NUCLEOTIDE SEQUENCE [MRNA] (ISOFORM 1)</scope>
    <scope>VARIANT TYR-850</scope>
    <source>
        <tissue>Brain</tissue>
    </source>
</reference>
<reference key="2">
    <citation type="journal article" date="2000" name="Glycobiology">
        <title>The heterodimeric structure of glucosidase II is required for its activity, solubility, and localization in vivo.</title>
        <authorList>
            <person name="Pelletier M.F."/>
            <person name="Marcil A."/>
            <person name="Sevigny G."/>
            <person name="Jakob C.A."/>
            <person name="Tessier D.C."/>
            <person name="Chevet E."/>
            <person name="Menard R."/>
            <person name="Bergeron J.J.M."/>
            <person name="Thomas D.Y."/>
        </authorList>
    </citation>
    <scope>NUCLEOTIDE SEQUENCE [MRNA] (ISOFORM 2)</scope>
    <scope>FUNCTION</scope>
    <scope>CATALYTIC ACTIVITY</scope>
    <scope>ACTIVITY REGULATION</scope>
    <scope>PATHWAY</scope>
    <scope>MUTAGENESIS OF ASP-542</scope>
    <scope>ACTIVE SITE</scope>
    <scope>INTERACTION WITH PRKCSH</scope>
    <scope>SUBCELLULAR LOCATION</scope>
    <scope>ALTERNATIVE SPLICING</scope>
</reference>
<reference key="3">
    <citation type="journal article" date="2006" name="Nature">
        <title>Human chromosome 11 DNA sequence and analysis including novel gene identification.</title>
        <authorList>
            <person name="Taylor T.D."/>
            <person name="Noguchi H."/>
            <person name="Totoki Y."/>
            <person name="Toyoda A."/>
            <person name="Kuroki Y."/>
            <person name="Dewar K."/>
            <person name="Lloyd C."/>
            <person name="Itoh T."/>
            <person name="Takeda T."/>
            <person name="Kim D.-W."/>
            <person name="She X."/>
            <person name="Barlow K.F."/>
            <person name="Bloom T."/>
            <person name="Bruford E."/>
            <person name="Chang J.L."/>
            <person name="Cuomo C.A."/>
            <person name="Eichler E."/>
            <person name="FitzGerald M.G."/>
            <person name="Jaffe D.B."/>
            <person name="LaButti K."/>
            <person name="Nicol R."/>
            <person name="Park H.-S."/>
            <person name="Seaman C."/>
            <person name="Sougnez C."/>
            <person name="Yang X."/>
            <person name="Zimmer A.R."/>
            <person name="Zody M.C."/>
            <person name="Birren B.W."/>
            <person name="Nusbaum C."/>
            <person name="Fujiyama A."/>
            <person name="Hattori M."/>
            <person name="Rogers J."/>
            <person name="Lander E.S."/>
            <person name="Sakaki Y."/>
        </authorList>
    </citation>
    <scope>NUCLEOTIDE SEQUENCE [LARGE SCALE GENOMIC DNA]</scope>
</reference>
<reference key="4">
    <citation type="journal article" date="1995" name="DNA Res.">
        <title>Prediction of the coding sequences of unidentified human genes. III. The coding sequences of 40 new genes (KIAA0081-KIAA0120) deduced by analysis of cDNA clones from human cell line KG-1.</title>
        <authorList>
            <person name="Nagase T."/>
            <person name="Miyajima N."/>
            <person name="Tanaka A."/>
            <person name="Sazuka T."/>
            <person name="Seki N."/>
            <person name="Sato S."/>
            <person name="Tabata S."/>
            <person name="Ishikawa K."/>
            <person name="Kawarabayasi Y."/>
            <person name="Kotani H."/>
            <person name="Nomura N."/>
        </authorList>
    </citation>
    <scope>NUCLEOTIDE SEQUENCE [LARGE SCALE MRNA] OF 2-944 (ISOFORM 1)</scope>
    <scope>VARIANT TYR-850</scope>
    <source>
        <tissue>Bone marrow</tissue>
    </source>
</reference>
<reference key="5">
    <citation type="journal article" date="2004" name="Genome Res.">
        <title>The status, quality, and expansion of the NIH full-length cDNA project: the Mammalian Gene Collection (MGC).</title>
        <authorList>
            <consortium name="The MGC Project Team"/>
        </authorList>
    </citation>
    <scope>NUCLEOTIDE SEQUENCE [LARGE SCALE MRNA] (ISOFORM 3)</scope>
    <scope>NUCLEOTIDE SEQUENCE [LARGE SCALE MRNA] OF 457-944 (ISOFORMS 1/2)</scope>
    <source>
        <tissue>Lymph</tissue>
        <tissue>Uterus</tissue>
    </source>
</reference>
<reference key="6">
    <citation type="submission" date="2007-03" db="UniProtKB">
        <authorList>
            <person name="Lubec G."/>
            <person name="Afjehi-Sadat L."/>
        </authorList>
    </citation>
    <scope>PROTEIN SEQUENCE OF 915-929</scope>
    <scope>IDENTIFICATION BY MASS SPECTROMETRY</scope>
    <source>
        <tissue>Brain</tissue>
        <tissue>Cajal-Retzius cell</tissue>
    </source>
</reference>
<reference key="7">
    <citation type="journal article" date="1985" name="J. Biol. Chem.">
        <title>Identity of neutral alpha-glucosidase AB and the glycoprotein processing enzyme glucosidase II. Biochemical and genetic studies.</title>
        <authorList>
            <person name="Martiniuk F."/>
            <person name="Ellenbogen A."/>
            <person name="Hirschhorn R."/>
        </authorList>
    </citation>
    <scope>GLYCOSYLATION</scope>
    <scope>TISSUE SPECIFICITY</scope>
</reference>
<reference key="8">
    <citation type="journal article" date="1996" name="J. Biol. Chem.">
        <title>Endoplasmic reticulum glucosidase II is composed of a catalytic subunit, conserved from yeast to mammals, and a tightly bound noncatalytic HDEL-containing subunit.</title>
        <authorList>
            <person name="Trombetta E.S."/>
            <person name="Simons J.F."/>
            <person name="Helenius A."/>
        </authorList>
    </citation>
    <scope>INTERACTION WITH PRKCSH</scope>
</reference>
<reference key="9">
    <citation type="journal article" date="2006" name="J. Proteome Res.">
        <title>Proteomic and bioinformatic characterization of the biogenesis and function of melanosomes.</title>
        <authorList>
            <person name="Chi A."/>
            <person name="Valencia J.C."/>
            <person name="Hu Z.-Z."/>
            <person name="Watabe H."/>
            <person name="Yamaguchi H."/>
            <person name="Mangini N.J."/>
            <person name="Huang H."/>
            <person name="Canfield V.A."/>
            <person name="Cheng K.C."/>
            <person name="Yang F."/>
            <person name="Abe R."/>
            <person name="Yamagishi S."/>
            <person name="Shabanowitz J."/>
            <person name="Hearing V.J."/>
            <person name="Wu C."/>
            <person name="Appella E."/>
            <person name="Hunt D.F."/>
        </authorList>
    </citation>
    <scope>SUBCELLULAR LOCATION [LARGE SCALE ANALYSIS]</scope>
    <source>
        <tissue>Melanoma</tissue>
    </source>
</reference>
<reference key="10">
    <citation type="journal article" date="2011" name="BMC Syst. Biol.">
        <title>Initial characterization of the human central proteome.</title>
        <authorList>
            <person name="Burkard T.R."/>
            <person name="Planyavsky M."/>
            <person name="Kaupe I."/>
            <person name="Breitwieser F.P."/>
            <person name="Buerckstuemmer T."/>
            <person name="Bennett K.L."/>
            <person name="Superti-Furga G."/>
            <person name="Colinge J."/>
        </authorList>
    </citation>
    <scope>IDENTIFICATION BY MASS SPECTROMETRY [LARGE SCALE ANALYSIS]</scope>
</reference>
<reference key="11">
    <citation type="journal article" date="2013" name="J. Proteome Res.">
        <title>Toward a comprehensive characterization of a human cancer cell phosphoproteome.</title>
        <authorList>
            <person name="Zhou H."/>
            <person name="Di Palma S."/>
            <person name="Preisinger C."/>
            <person name="Peng M."/>
            <person name="Polat A.N."/>
            <person name="Heck A.J."/>
            <person name="Mohammed S."/>
        </authorList>
    </citation>
    <scope>PHOSPHORYLATION [LARGE SCALE ANALYSIS] AT SER-52</scope>
    <scope>IDENTIFICATION BY MASS SPECTROMETRY [LARGE SCALE ANALYSIS]</scope>
    <source>
        <tissue>Erythroleukemia</tissue>
    </source>
</reference>
<reference key="12">
    <citation type="journal article" date="2014" name="J. Proteomics">
        <title>An enzyme assisted RP-RPLC approach for in-depth analysis of human liver phosphoproteome.</title>
        <authorList>
            <person name="Bian Y."/>
            <person name="Song C."/>
            <person name="Cheng K."/>
            <person name="Dong M."/>
            <person name="Wang F."/>
            <person name="Huang J."/>
            <person name="Sun D."/>
            <person name="Wang L."/>
            <person name="Ye M."/>
            <person name="Zou H."/>
        </authorList>
    </citation>
    <scope>IDENTIFICATION BY MASS SPECTROMETRY [LARGE SCALE ANALYSIS]</scope>
    <source>
        <tissue>Liver</tissue>
    </source>
</reference>
<reference key="13">
    <citation type="journal article" date="2015" name="Proteomics">
        <title>N-terminome analysis of the human mitochondrial proteome.</title>
        <authorList>
            <person name="Vaca Jacome A.S."/>
            <person name="Rabilloud T."/>
            <person name="Schaeffer-Reiss C."/>
            <person name="Rompais M."/>
            <person name="Ayoub D."/>
            <person name="Lane L."/>
            <person name="Bairoch A."/>
            <person name="Van Dorsselaer A."/>
            <person name="Carapito C."/>
        </authorList>
    </citation>
    <scope>IDENTIFICATION BY MASS SPECTROMETRY [LARGE SCALE ANALYSIS]</scope>
</reference>
<reference key="14">
    <citation type="journal article" date="2016" name="Am. J. Hum. Genet.">
        <title>Mutations in GANAB, encoding the glucosidase IIalpha subunit, cause autosomal-dominant polycystic kidney and liver disease.</title>
        <authorList>
            <consortium name="Genkyst Study Group, HALT Progression of Polycystic Kidney Disease Group"/>
            <consortium name="Consortium for Radiologic Imaging Studies of Polycystic Kidney Disease"/>
            <person name="Porath B."/>
            <person name="Gainullin V.G."/>
            <person name="Cornec-Le Gall E."/>
            <person name="Dillinger E.K."/>
            <person name="Heyer C.M."/>
            <person name="Hopp K."/>
            <person name="Edwards M.E."/>
            <person name="Madsen C.D."/>
            <person name="Mauritz S.R."/>
            <person name="Banks C.J."/>
            <person name="Baheti S."/>
            <person name="Reddy B."/>
            <person name="Herrero J.I."/>
            <person name="Banales J.M."/>
            <person name="Hogan M.C."/>
            <person name="Tasic V."/>
            <person name="Watnick T.J."/>
            <person name="Chapman A.B."/>
            <person name="Vigneau C."/>
            <person name="Lavainne F."/>
            <person name="Audrezet M.P."/>
            <person name="Ferec C."/>
            <person name="Le Meur Y."/>
            <person name="Torres V.E."/>
            <person name="Harris P.C."/>
        </authorList>
    </citation>
    <scope>INVOLVEMENT IN PKD3</scope>
    <scope>VARIANTS PKD3 ARG-383 AND LEU-400</scope>
    <scope>VARIANT TRP-817</scope>
    <scope>ALTERNATIVE SPLICING (ISOFORMS 1 AND 2)</scope>
    <scope>TISSUE SPECIFICITY</scope>
    <scope>CHARACTERIZATION OF VARIANTS PKD3 ARG-383 AND LEU-400</scope>
    <scope>CHARACTERIZATION OF VARIANTS ARG-95; ALA-232; CYS-309 AND TRP-817</scope>
    <scope>FUNCTION</scope>
</reference>
<reference key="15">
    <citation type="journal article" date="2017" name="J. Clin. Invest.">
        <title>Isolated polycystic liver disease genes define effectors of polycystin-1 function.</title>
        <authorList>
            <person name="Besse W."/>
            <person name="Dong K."/>
            <person name="Choi J."/>
            <person name="Punia S."/>
            <person name="Fedeles S.V."/>
            <person name="Choi M."/>
            <person name="Gallagher A.R."/>
            <person name="Huang E.B."/>
            <person name="Gulati A."/>
            <person name="Knight J."/>
            <person name="Mane S."/>
            <person name="Tahvanainen E."/>
            <person name="Tahvanainen P."/>
            <person name="Sanna-Cherchi S."/>
            <person name="Lifton R.P."/>
            <person name="Watnick T."/>
            <person name="Pei Y.P."/>
            <person name="Torres V.E."/>
            <person name="Somlo S."/>
        </authorList>
    </citation>
    <scope>VARIANTS ASN-785; TYR-850 AND 918-GLN--ARG-944 DEL</scope>
    <scope>CHARACTERIZATION OF VARIANTS ASN-785 AND TYR-850</scope>
</reference>
<reference key="16">
    <citation type="journal article" date="2020" name="Orphanet J. Rare Dis.">
        <title>Novel GANAB variants associated with polycystic liver disease.</title>
        <authorList>
            <person name="van de Laarschot L.F.M."/>
            <person name="Te Morsche R.H.M."/>
            <person name="Hoischen A."/>
            <person name="Venselaar H."/>
            <person name="Roelofs H.M."/>
            <person name="Cnossen W.R."/>
            <person name="Banales J.M."/>
            <person name="Roepman R."/>
            <person name="Drenth J.P.H."/>
        </authorList>
    </citation>
    <scope>VARIANT PKD3 4-VAL-ALA-5 DEL</scope>
    <scope>VARIANTS PRO-590; 815-ARG--ARG-944 DEL AND 864-ARG--ARG-944 DEL</scope>
    <scope>SUBCELLULAR LOCATION</scope>
</reference>